<name>TXA2_STEGR</name>
<evidence type="ECO:0000250" key="1">
    <source>
        <dbReference type="UniProtKB" id="P55847"/>
    </source>
</evidence>
<evidence type="ECO:0000250" key="2">
    <source>
        <dbReference type="UniProtKB" id="Q4U4N3"/>
    </source>
</evidence>
<evidence type="ECO:0000255" key="3"/>
<evidence type="ECO:0000305" key="4"/>
<evidence type="ECO:0000305" key="5">
    <source>
    </source>
</evidence>
<keyword id="KW-1015">Disulfide bond</keyword>
<keyword id="KW-0964">Secreted</keyword>
<keyword id="KW-0732">Signal</keyword>
<accession>V9QFH8</accession>
<accession>V9QEK0</accession>
<dbReference type="EMBL" id="KF751523">
    <property type="protein sequence ID" value="AHC13268.1"/>
    <property type="molecule type" value="mRNA"/>
</dbReference>
<dbReference type="EMBL" id="KF751524">
    <property type="protein sequence ID" value="AHC13269.1"/>
    <property type="molecule type" value="mRNA"/>
</dbReference>
<dbReference type="SMR" id="V9QFH8"/>
<dbReference type="GO" id="GO:0005576">
    <property type="term" value="C:extracellular region"/>
    <property type="evidence" value="ECO:0007669"/>
    <property type="project" value="UniProtKB-SubCell"/>
</dbReference>
<dbReference type="GO" id="GO:0005184">
    <property type="term" value="F:neuropeptide hormone activity"/>
    <property type="evidence" value="ECO:0007669"/>
    <property type="project" value="InterPro"/>
</dbReference>
<dbReference type="Gene3D" id="1.10.2010.10">
    <property type="entry name" value="Crustacean CHH/MIH/GIH neurohormone"/>
    <property type="match status" value="1"/>
</dbReference>
<dbReference type="InterPro" id="IPR018251">
    <property type="entry name" value="Crust_neurhormone_CS"/>
</dbReference>
<dbReference type="InterPro" id="IPR031098">
    <property type="entry name" value="Crust_neurohorm"/>
</dbReference>
<dbReference type="InterPro" id="IPR035957">
    <property type="entry name" value="Crust_neurohorm_sf"/>
</dbReference>
<dbReference type="Pfam" id="PF01147">
    <property type="entry name" value="Crust_neurohorm"/>
    <property type="match status" value="1"/>
</dbReference>
<dbReference type="SUPFAM" id="SSF81778">
    <property type="entry name" value="Crustacean CHH/MIH/GIH neurohormone"/>
    <property type="match status" value="1"/>
</dbReference>
<dbReference type="PROSITE" id="PS01250">
    <property type="entry name" value="CHH_MIH_GIH"/>
    <property type="match status" value="1"/>
</dbReference>
<sequence>MFKLICIVFIATILSITSAADNEDELTIEDFLSYECNESMDIEELKEKDKVCSRCANLHKTQSVIERCRLNCFTSEYFKNCEDNLQAKEEEPEEETL</sequence>
<proteinExistence type="inferred from homology"/>
<organism>
    <name type="scientific">Steatoda grossa</name>
    <name type="common">False black widow</name>
    <dbReference type="NCBI Taxonomy" id="256750"/>
    <lineage>
        <taxon>Eukaryota</taxon>
        <taxon>Metazoa</taxon>
        <taxon>Ecdysozoa</taxon>
        <taxon>Arthropoda</taxon>
        <taxon>Chelicerata</taxon>
        <taxon>Arachnida</taxon>
        <taxon>Araneae</taxon>
        <taxon>Araneomorphae</taxon>
        <taxon>Entelegynae</taxon>
        <taxon>Araneoidea</taxon>
        <taxon>Theridiidae</taxon>
        <taxon>Steatoda</taxon>
    </lineage>
</organism>
<protein>
    <recommendedName>
        <fullName evidence="2">Alpha-latrotoxin associated low molecular weight protein 2</fullName>
        <shortName evidence="2">Alpha-latrotoxin-associated LMWP2</shortName>
    </recommendedName>
    <alternativeName>
        <fullName evidence="2">Latrodectin-2</fullName>
    </alternativeName>
</protein>
<comment type="function">
    <text evidence="2">May increase the toxicity of alpha-latrotoxin and/or other venom components. Is non-toxic to mice and to the cockroach Periplaneta americana.</text>
</comment>
<comment type="subcellular location">
    <subcellularLocation>
        <location evidence="2">Secreted</location>
    </subcellularLocation>
</comment>
<comment type="tissue specificity">
    <text evidence="4">Expressed by the venom gland.</text>
</comment>
<comment type="miscellaneous">
    <text evidence="2">Co-purifies with latroinsectotoxin.</text>
</comment>
<comment type="similarity">
    <text evidence="5">Belongs to the arthropod CHH/MIH/GIH/VIH hormone family.</text>
</comment>
<reference key="1">
    <citation type="journal article" date="2014" name="Gene">
        <title>Recruitment and diversification of an ecdysozoan family of neuropeptide hormones for black widow spider venom expression.</title>
        <authorList>
            <person name="McCowan C."/>
            <person name="Garb J.E."/>
        </authorList>
    </citation>
    <scope>NUCLEOTIDE SEQUENCE [MRNA]</scope>
    <source>
        <tissue>Venom gland</tissue>
    </source>
</reference>
<feature type="signal peptide" evidence="3">
    <location>
        <begin position="1"/>
        <end position="19"/>
    </location>
</feature>
<feature type="chain" id="PRO_0000432882" description="Alpha-latrotoxin associated low molecular weight protein 2">
    <location>
        <begin position="20"/>
        <end position="97"/>
    </location>
</feature>
<feature type="disulfide bond" evidence="1">
    <location>
        <begin position="36"/>
        <end position="72"/>
    </location>
</feature>
<feature type="disulfide bond" evidence="1">
    <location>
        <begin position="52"/>
        <end position="68"/>
    </location>
</feature>
<feature type="disulfide bond" evidence="1">
    <location>
        <begin position="55"/>
        <end position="81"/>
    </location>
</feature>
<feature type="sequence conflict" description="In Ref. 1; AHC13269." evidence="4" ref="1">
    <original>I</original>
    <variation>M</variation>
    <location>
        <position position="28"/>
    </location>
</feature>
<feature type="sequence conflict" description="In Ref. 1; AHC13269." evidence="4" ref="1">
    <original>A</original>
    <variation>T</variation>
    <location>
        <position position="87"/>
    </location>
</feature>